<sequence>MASSGHSDLGEVTSEIKASERRTAVAIADLEWREMEGDDCEFHYGEGPNEAQDNDFPIEERSRLQEMLFLLGLETYQTQKLSLQDALQISSDSMKNWAPQTPKDLPWNFLRKLQALNAEARNTTMVLDLPLDTRPVEKESQMEEEIIYWDTAEDISADIYSFSELPTPDTPVNPLDLLCALLLSSDSFLQQEIVSKMSLCQFALPLILPDPENHYHTFLLWAMRGTVRTWGSQPPRVMGSFREDSMVLSRAPAFAFVRMEVSSNSKSQLLNDVLSPGHRQQDCFWHRDLNLGTNPREIADGLVEISWFLPSGREDLDIFPEPMAFLNLRGDIGSHWLQFKLLTEISSAIFILTDNISKKEYKLLSSMKGSATKYYFILSPYRGKRNTNLRFLNRLIPVLKMDHSHVLVKVSSTDSVGFVRRVRAIITHVTRSPCRRVSVEDMANAARKLGLKVDEDCEECQRAKDRMEQITRKIKDLDAYRRDELRLQGETWRKVAQVEKELCQIQWASDPPEKYRAELRHRLLELRMQQNDHDPSWGVQEFISGISSPSLGEKQYFLKWMEWGLARVAQPRPRPSPEMIFTLRPKHCGAVDFSEPFWPEPLGVEHFLREMGQFYEAESCLVEAGKLPAGQRRFAHFPGLALELLLKGLPLELIDGNTLSPALRWVTGLLKELHVRLERRSRLVVLSALGVPGTGKSTLLNTMFGLRFVTGRGRGPRGAFMQLIKVAESFSQDLGCDHILVIDSGGLIAGVRTEAGERFEREASLATLIMGLSNVTVVSLAETRNIPPAILHAFLRLEKTGHMPNYQFVHQNLHDVSALGSKPRDRRQLLDQPSDVGRATVQMEKQGDGIQTLADLAFWDPEKQHIWHIPGLWHGVPPMAAVNLAYSEAIFELKRCLLENIRNGLSNQNKNIQQLIELVRRL</sequence>
<evidence type="ECO:0000250" key="1"/>
<evidence type="ECO:0000250" key="2">
    <source>
        <dbReference type="UniProtKB" id="Q8TCY9"/>
    </source>
</evidence>
<evidence type="ECO:0000255" key="3">
    <source>
        <dbReference type="PROSITE-ProRule" id="PRU01054"/>
    </source>
</evidence>
<evidence type="ECO:0000256" key="4">
    <source>
        <dbReference type="SAM" id="MobiDB-lite"/>
    </source>
</evidence>
<evidence type="ECO:0000305" key="5"/>
<evidence type="ECO:0000312" key="6">
    <source>
        <dbReference type="EMBL" id="AAI26572.1"/>
    </source>
</evidence>
<evidence type="ECO:0000312" key="7">
    <source>
        <dbReference type="EMBL" id="AAX46504.1"/>
    </source>
</evidence>
<comment type="function">
    <text evidence="1">May be involved in cell cycle progression through the regulation of cyclin D1 expression.</text>
</comment>
<comment type="subcellular location">
    <subcellularLocation>
        <location evidence="2">Cytoplasm</location>
    </subcellularLocation>
    <subcellularLocation>
        <location evidence="2">Nucleus</location>
    </subcellularLocation>
    <text evidence="1">In epithelial cells localized predominantly in the cytoplasm and occasionally in nuclei.</text>
</comment>
<comment type="similarity">
    <text evidence="5">Belongs to the TRAFAC class dynamin-like GTPase superfamily. Very large inducible GTPase (VLIG) family.</text>
</comment>
<comment type="sequence caution" evidence="5">
    <conflict type="miscellaneous discrepancy">
        <sequence resource="EMBL-CDS" id="AAI26572"/>
    </conflict>
    <text>Contaminating sequence. Potential poly-A sequence.</text>
</comment>
<comment type="sequence caution" evidence="5">
    <conflict type="frameshift">
        <sequence resource="EMBL-CDS" id="AAX46504"/>
    </conflict>
</comment>
<gene>
    <name type="primary">URGCP</name>
    <name type="synonym">URG4</name>
</gene>
<name>URGCP_BOVIN</name>
<protein>
    <recommendedName>
        <fullName>Up-regulator of cell proliferation</fullName>
    </recommendedName>
    <alternativeName>
        <fullName>HBV X protein up-regulated gene 4 protein homolog</fullName>
    </alternativeName>
    <alternativeName>
        <fullName>HBxAg up-regulated gene 4 protein homolog</fullName>
    </alternativeName>
</protein>
<proteinExistence type="evidence at transcript level"/>
<dbReference type="EMBL" id="BT021657">
    <property type="protein sequence ID" value="AAX46504.1"/>
    <property type="status" value="ALT_FRAME"/>
    <property type="molecule type" value="mRNA"/>
</dbReference>
<dbReference type="EMBL" id="AAFC03035144">
    <property type="status" value="NOT_ANNOTATED_CDS"/>
    <property type="molecule type" value="Genomic_DNA"/>
</dbReference>
<dbReference type="EMBL" id="BC126571">
    <property type="protein sequence ID" value="AAI26572.1"/>
    <property type="status" value="ALT_SEQ"/>
    <property type="molecule type" value="mRNA"/>
</dbReference>
<dbReference type="RefSeq" id="NP_001015513.2">
    <property type="nucleotide sequence ID" value="NM_001015513.2"/>
</dbReference>
<dbReference type="FunCoup" id="A0JN92">
    <property type="interactions" value="669"/>
</dbReference>
<dbReference type="STRING" id="9913.ENSBTAP00000047986"/>
<dbReference type="PaxDb" id="9913-ENSBTAP00000040111"/>
<dbReference type="Ensembl" id="ENSBTAT00000040335.5">
    <property type="protein sequence ID" value="ENSBTAP00000040111.4"/>
    <property type="gene ID" value="ENSBTAG00000009453.7"/>
</dbReference>
<dbReference type="GeneID" id="504226"/>
<dbReference type="KEGG" id="bta:504226"/>
<dbReference type="CTD" id="55665"/>
<dbReference type="VEuPathDB" id="HostDB:ENSBTAG00000009453"/>
<dbReference type="eggNOG" id="ENOG502QU4G">
    <property type="taxonomic scope" value="Eukaryota"/>
</dbReference>
<dbReference type="GeneTree" id="ENSGT00940000154390"/>
<dbReference type="HOGENOM" id="CLU_002276_0_0_1"/>
<dbReference type="InParanoid" id="A0JN92"/>
<dbReference type="OMA" id="QENTDGT"/>
<dbReference type="OrthoDB" id="1597724at2759"/>
<dbReference type="TreeFam" id="TF335271"/>
<dbReference type="Proteomes" id="UP000009136">
    <property type="component" value="Chromosome 22"/>
</dbReference>
<dbReference type="Bgee" id="ENSBTAG00000009453">
    <property type="expression patterns" value="Expressed in vas deferens and 106 other cell types or tissues"/>
</dbReference>
<dbReference type="GO" id="GO:0005737">
    <property type="term" value="C:cytoplasm"/>
    <property type="evidence" value="ECO:0007669"/>
    <property type="project" value="UniProtKB-SubCell"/>
</dbReference>
<dbReference type="GO" id="GO:0005634">
    <property type="term" value="C:nucleus"/>
    <property type="evidence" value="ECO:0007669"/>
    <property type="project" value="UniProtKB-SubCell"/>
</dbReference>
<dbReference type="GO" id="GO:0005525">
    <property type="term" value="F:GTP binding"/>
    <property type="evidence" value="ECO:0007669"/>
    <property type="project" value="UniProtKB-KW"/>
</dbReference>
<dbReference type="Gene3D" id="3.40.50.300">
    <property type="entry name" value="P-loop containing nucleotide triphosphate hydrolases"/>
    <property type="match status" value="1"/>
</dbReference>
<dbReference type="InterPro" id="IPR030383">
    <property type="entry name" value="G_VLIG_dom"/>
</dbReference>
<dbReference type="InterPro" id="IPR027417">
    <property type="entry name" value="P-loop_NTPase"/>
</dbReference>
<dbReference type="PANTHER" id="PTHR22796:SF13">
    <property type="entry name" value="UP-REGULATOR OF CELL PROLIFERATION"/>
    <property type="match status" value="1"/>
</dbReference>
<dbReference type="PANTHER" id="PTHR22796">
    <property type="entry name" value="URG4-RELATED"/>
    <property type="match status" value="1"/>
</dbReference>
<dbReference type="Pfam" id="PF25496">
    <property type="entry name" value="URGCP"/>
    <property type="match status" value="1"/>
</dbReference>
<dbReference type="SUPFAM" id="SSF52540">
    <property type="entry name" value="P-loop containing nucleoside triphosphate hydrolases"/>
    <property type="match status" value="1"/>
</dbReference>
<dbReference type="PROSITE" id="PS51717">
    <property type="entry name" value="G_VLIG"/>
    <property type="match status" value="1"/>
</dbReference>
<organism>
    <name type="scientific">Bos taurus</name>
    <name type="common">Bovine</name>
    <dbReference type="NCBI Taxonomy" id="9913"/>
    <lineage>
        <taxon>Eukaryota</taxon>
        <taxon>Metazoa</taxon>
        <taxon>Chordata</taxon>
        <taxon>Craniata</taxon>
        <taxon>Vertebrata</taxon>
        <taxon>Euteleostomi</taxon>
        <taxon>Mammalia</taxon>
        <taxon>Eutheria</taxon>
        <taxon>Laurasiatheria</taxon>
        <taxon>Artiodactyla</taxon>
        <taxon>Ruminantia</taxon>
        <taxon>Pecora</taxon>
        <taxon>Bovidae</taxon>
        <taxon>Bovinae</taxon>
        <taxon>Bos</taxon>
    </lineage>
</organism>
<accession>A0JN92</accession>
<accession>Q58DE0</accession>
<keyword id="KW-0131">Cell cycle</keyword>
<keyword id="KW-0963">Cytoplasm</keyword>
<keyword id="KW-0342">GTP-binding</keyword>
<keyword id="KW-0547">Nucleotide-binding</keyword>
<keyword id="KW-0539">Nucleus</keyword>
<keyword id="KW-0597">Phosphoprotein</keyword>
<keyword id="KW-1185">Reference proteome</keyword>
<reference evidence="7" key="1">
    <citation type="journal article" date="2005" name="BMC Genomics">
        <title>Characterization of 954 bovine full-CDS cDNA sequences.</title>
        <authorList>
            <person name="Harhay G.P."/>
            <person name="Sonstegard T.S."/>
            <person name="Keele J.W."/>
            <person name="Heaton M.P."/>
            <person name="Clawson M.L."/>
            <person name="Snelling W.M."/>
            <person name="Wiedmann R.T."/>
            <person name="Van Tassell C.P."/>
            <person name="Smith T.P.L."/>
        </authorList>
    </citation>
    <scope>NUCLEOTIDE SEQUENCE [LARGE SCALE MRNA]</scope>
</reference>
<reference key="2">
    <citation type="journal article" date="2009" name="Science">
        <title>The genome sequence of taurine cattle: a window to ruminant biology and evolution.</title>
        <authorList>
            <consortium name="The bovine genome sequencing and analysis consortium"/>
        </authorList>
    </citation>
    <scope>NUCLEOTIDE SEQUENCE [LARGE SCALE GENOMIC DNA]</scope>
    <source>
        <strain>Hereford</strain>
    </source>
</reference>
<reference evidence="5 6" key="3">
    <citation type="submission" date="2006-10" db="EMBL/GenBank/DDBJ databases">
        <authorList>
            <consortium name="NIH - Mammalian Gene Collection (MGC) project"/>
        </authorList>
    </citation>
    <scope>NUCLEOTIDE SEQUENCE [LARGE SCALE MRNA] OF 1-915</scope>
    <source>
        <strain evidence="6">Hereford</strain>
        <tissue evidence="6">Fetal spinal cord</tissue>
    </source>
</reference>
<feature type="chain" id="PRO_0000337147" description="Up-regulator of cell proliferation">
    <location>
        <begin position="1"/>
        <end position="922"/>
    </location>
</feature>
<feature type="domain" description="VLIG-type G" evidence="3">
    <location>
        <begin position="680"/>
        <end position="920"/>
    </location>
</feature>
<feature type="region of interest" description="Disordered" evidence="4">
    <location>
        <begin position="1"/>
        <end position="20"/>
    </location>
</feature>
<feature type="modified residue" description="Phosphoserine" evidence="2">
    <location>
        <position position="3"/>
    </location>
</feature>
<feature type="sequence conflict" description="In Ref. 1; AAX46504." evidence="5" ref="1">
    <original>Q</original>
    <variation>T</variation>
    <location>
        <position position="461"/>
    </location>
</feature>